<keyword id="KW-0067">ATP-binding</keyword>
<keyword id="KW-0436">Ligase</keyword>
<keyword id="KW-0547">Nucleotide-binding</keyword>
<keyword id="KW-1185">Reference proteome</keyword>
<protein>
    <recommendedName>
        <fullName evidence="3">Phenylacetyl-CoA ligase epaB</fullName>
        <ecNumber evidence="5">6.2.1.-</ecNumber>
    </recommendedName>
    <alternativeName>
        <fullName evidence="3">Pestalamide A biosynthesis cluster protein B</fullName>
    </alternativeName>
</protein>
<sequence>MFFQGEGSIDIPVQDIISWIFDQARYEIEKPVYIDASNTSRSISWRQARTLVRQLAAGLRAAGLKDGDCVCLHSFNDIYYSILVLGIIAAGGIYMGTNPGYTSHELDYHLRVAQAKFVISDPEMLDRMIPAAEGNGIPKDRIWAFTTRESQVIATTGLAHWTALLNHGEADWRRLDDPNHAKTTVVARLFSSGTTGLPKPVDFTHYNIIAQHTLVYDAHPVPFETSRILSLPFFHAAAAPSAHFSALRLGDPSYVLRRFEPDLFLTTVAKHNITECTAVPPIILAILSHCTTPKYSNSLQSLKIVRCGAAPLDKTTQARFQSLLAPDATFTQVWGMTESSCIATMIPYPESDDTGSVGRLLPGMEAKIINTDGDDITAPDTTGEVCLRGPTVVRGYFNLPSANESAFDKDGFYRTGDLGYCDGKTRKWYLLDRKKDIIKVRGFQVAPAEVEGVLRNHPRIRDVAVVGVYDAEAKTEYPRAYVVRQDQSLQEEEVKEFVALRLAKYKRLDGGVRFVDAIPRNASGKILKRLLEDKRDEKL</sequence>
<organism>
    <name type="scientific">Aspergillus niger (strain ATCC MYA-4892 / CBS 513.88 / FGSC A1513)</name>
    <dbReference type="NCBI Taxonomy" id="425011"/>
    <lineage>
        <taxon>Eukaryota</taxon>
        <taxon>Fungi</taxon>
        <taxon>Dikarya</taxon>
        <taxon>Ascomycota</taxon>
        <taxon>Pezizomycotina</taxon>
        <taxon>Eurotiomycetes</taxon>
        <taxon>Eurotiomycetidae</taxon>
        <taxon>Eurotiales</taxon>
        <taxon>Aspergillaceae</taxon>
        <taxon>Aspergillus</taxon>
        <taxon>Aspergillus subgen. Circumdati</taxon>
    </lineage>
</organism>
<proteinExistence type="inferred from homology"/>
<accession>A2QTE5</accession>
<gene>
    <name evidence="3" type="primary">epaB</name>
    <name type="ORF">An09g01820</name>
</gene>
<comment type="function">
    <text evidence="2 5">Phenylacetyl-CoA ligase; part of the gene cluster that mediates the biosynthesis of nigerpyrone and its derivatives carbonarone A and pestalamide A (PubMed:30384904). The biosynthesis pathway begins with the polyketide assembly by epaA to form phenylacetyl triketide precursor from successive condensation of two malonyl-CoA, presumably with one phenylacetyl-CoA starter unit produced by the phenylacetyl-CoA ligase epaB (PubMed:30384904). For the nigerpyrone biosynthesis, the reactive polyketide chain is released as an aldehyde through the R-domain. A nonenzymatic cyclization and dehydration may create nigerpyrone (PubMed:30384904). For the biosynthesis of carbonarone A and pestalamide A, an extra methyl group is added through the C-methyltransferase domain. Several further steps involving the dehydrogenase orf1, the cytochrome P450 monooxygenase orf2 and the FAD-dependent monooxygenase orf3 are required to form a carbonarone A precursor which is converted to carbonarone A via cyclization (PubMed:30384904). The O-acetyltransferase epaC could catalyze the transfer of 2-methylsuccinyl-CoA, a common intermediate in the ethylmalonyl-CoA pathway, to generate the final product pestalamide A (Probable).</text>
</comment>
<comment type="pathway">
    <text evidence="5">Secondary metabolite biosynthesis.</text>
</comment>
<comment type="similarity">
    <text evidence="4">Belongs to the ATP-dependent AMP-binding enzyme family.</text>
</comment>
<name>EPAB_ASPNC</name>
<reference key="1">
    <citation type="journal article" date="2007" name="Nat. Biotechnol.">
        <title>Genome sequencing and analysis of the versatile cell factory Aspergillus niger CBS 513.88.</title>
        <authorList>
            <person name="Pel H.J."/>
            <person name="de Winde J.H."/>
            <person name="Archer D.B."/>
            <person name="Dyer P.S."/>
            <person name="Hofmann G."/>
            <person name="Schaap P.J."/>
            <person name="Turner G."/>
            <person name="de Vries R.P."/>
            <person name="Albang R."/>
            <person name="Albermann K."/>
            <person name="Andersen M.R."/>
            <person name="Bendtsen J.D."/>
            <person name="Benen J.A.E."/>
            <person name="van den Berg M."/>
            <person name="Breestraat S."/>
            <person name="Caddick M.X."/>
            <person name="Contreras R."/>
            <person name="Cornell M."/>
            <person name="Coutinho P.M."/>
            <person name="Danchin E.G.J."/>
            <person name="Debets A.J.M."/>
            <person name="Dekker P."/>
            <person name="van Dijck P.W.M."/>
            <person name="van Dijk A."/>
            <person name="Dijkhuizen L."/>
            <person name="Driessen A.J.M."/>
            <person name="d'Enfert C."/>
            <person name="Geysens S."/>
            <person name="Goosen C."/>
            <person name="Groot G.S.P."/>
            <person name="de Groot P.W.J."/>
            <person name="Guillemette T."/>
            <person name="Henrissat B."/>
            <person name="Herweijer M."/>
            <person name="van den Hombergh J.P.T.W."/>
            <person name="van den Hondel C.A.M.J.J."/>
            <person name="van der Heijden R.T.J.M."/>
            <person name="van der Kaaij R.M."/>
            <person name="Klis F.M."/>
            <person name="Kools H.J."/>
            <person name="Kubicek C.P."/>
            <person name="van Kuyk P.A."/>
            <person name="Lauber J."/>
            <person name="Lu X."/>
            <person name="van der Maarel M.J.E.C."/>
            <person name="Meulenberg R."/>
            <person name="Menke H."/>
            <person name="Mortimer M.A."/>
            <person name="Nielsen J."/>
            <person name="Oliver S.G."/>
            <person name="Olsthoorn M."/>
            <person name="Pal K."/>
            <person name="van Peij N.N.M.E."/>
            <person name="Ram A.F.J."/>
            <person name="Rinas U."/>
            <person name="Roubos J.A."/>
            <person name="Sagt C.M.J."/>
            <person name="Schmoll M."/>
            <person name="Sun J."/>
            <person name="Ussery D."/>
            <person name="Varga J."/>
            <person name="Vervecken W."/>
            <person name="van de Vondervoort P.J.J."/>
            <person name="Wedler H."/>
            <person name="Woesten H.A.B."/>
            <person name="Zeng A.-P."/>
            <person name="van Ooyen A.J.J."/>
            <person name="Visser J."/>
            <person name="Stam H."/>
        </authorList>
    </citation>
    <scope>NUCLEOTIDE SEQUENCE [LARGE SCALE GENOMIC DNA]</scope>
    <source>
        <strain>ATCC MYA-4892 / CBS 513.88 / FGSC A1513</strain>
    </source>
</reference>
<reference key="2">
    <citation type="journal article" date="2018" name="Microbiol. Res.">
        <title>Deletion of the epigenetic regulator GcnE in Aspergillus niger FGSC A1279 activates the production of multiple polyketide metabolites.</title>
        <authorList>
            <person name="Wang B."/>
            <person name="Li X."/>
            <person name="Yu D."/>
            <person name="Chen X."/>
            <person name="Tabudravu J."/>
            <person name="Deng H."/>
            <person name="Pan L."/>
        </authorList>
    </citation>
    <scope>IDENTIFICATION</scope>
    <scope>FUNCTION</scope>
    <scope>PATHWAY</scope>
</reference>
<dbReference type="EC" id="6.2.1.-" evidence="5"/>
<dbReference type="EMBL" id="AM270194">
    <property type="protein sequence ID" value="CAK40120.1"/>
    <property type="molecule type" value="Genomic_DNA"/>
</dbReference>
<dbReference type="RefSeq" id="XP_001393497.1">
    <property type="nucleotide sequence ID" value="XM_001393460.1"/>
</dbReference>
<dbReference type="SMR" id="A2QTE5"/>
<dbReference type="EnsemblFungi" id="CAK40120">
    <property type="protein sequence ID" value="CAK40120"/>
    <property type="gene ID" value="An09g01820"/>
</dbReference>
<dbReference type="GeneID" id="4983713"/>
<dbReference type="KEGG" id="ang:An09g01820"/>
<dbReference type="VEuPathDB" id="FungiDB:An09g01820"/>
<dbReference type="HOGENOM" id="CLU_000022_59_2_1"/>
<dbReference type="Proteomes" id="UP000006706">
    <property type="component" value="Chromosome 1L"/>
</dbReference>
<dbReference type="GO" id="GO:0005524">
    <property type="term" value="F:ATP binding"/>
    <property type="evidence" value="ECO:0007669"/>
    <property type="project" value="UniProtKB-KW"/>
</dbReference>
<dbReference type="GO" id="GO:0016405">
    <property type="term" value="F:CoA-ligase activity"/>
    <property type="evidence" value="ECO:0007669"/>
    <property type="project" value="TreeGrafter"/>
</dbReference>
<dbReference type="GO" id="GO:0019748">
    <property type="term" value="P:secondary metabolic process"/>
    <property type="evidence" value="ECO:0007669"/>
    <property type="project" value="TreeGrafter"/>
</dbReference>
<dbReference type="CDD" id="cd05911">
    <property type="entry name" value="Firefly_Luc_like"/>
    <property type="match status" value="1"/>
</dbReference>
<dbReference type="FunFam" id="3.30.300.30:FF:000007">
    <property type="entry name" value="4-coumarate--CoA ligase 2"/>
    <property type="match status" value="1"/>
</dbReference>
<dbReference type="Gene3D" id="3.30.300.30">
    <property type="match status" value="1"/>
</dbReference>
<dbReference type="Gene3D" id="3.40.50.12780">
    <property type="entry name" value="N-terminal domain of ligase-like"/>
    <property type="match status" value="1"/>
</dbReference>
<dbReference type="InterPro" id="IPR025110">
    <property type="entry name" value="AMP-bd_C"/>
</dbReference>
<dbReference type="InterPro" id="IPR045851">
    <property type="entry name" value="AMP-bd_C_sf"/>
</dbReference>
<dbReference type="InterPro" id="IPR000873">
    <property type="entry name" value="AMP-dep_synth/lig_dom"/>
</dbReference>
<dbReference type="InterPro" id="IPR042099">
    <property type="entry name" value="ANL_N_sf"/>
</dbReference>
<dbReference type="PANTHER" id="PTHR24096:SF265">
    <property type="entry name" value="ENZYME, PUTATIVE (AFU_ORTHOLOGUE AFUA_5G14270)-RELATED"/>
    <property type="match status" value="1"/>
</dbReference>
<dbReference type="PANTHER" id="PTHR24096">
    <property type="entry name" value="LONG-CHAIN-FATTY-ACID--COA LIGASE"/>
    <property type="match status" value="1"/>
</dbReference>
<dbReference type="Pfam" id="PF00501">
    <property type="entry name" value="AMP-binding"/>
    <property type="match status" value="1"/>
</dbReference>
<dbReference type="Pfam" id="PF13193">
    <property type="entry name" value="AMP-binding_C"/>
    <property type="match status" value="1"/>
</dbReference>
<dbReference type="SUPFAM" id="SSF56801">
    <property type="entry name" value="Acetyl-CoA synthetase-like"/>
    <property type="match status" value="1"/>
</dbReference>
<evidence type="ECO:0000255" key="1"/>
<evidence type="ECO:0000269" key="2">
    <source>
    </source>
</evidence>
<evidence type="ECO:0000303" key="3">
    <source>
    </source>
</evidence>
<evidence type="ECO:0000305" key="4"/>
<evidence type="ECO:0000305" key="5">
    <source>
    </source>
</evidence>
<feature type="chain" id="PRO_0000446155" description="Phenylacetyl-CoA ligase epaB">
    <location>
        <begin position="1"/>
        <end position="539"/>
    </location>
</feature>
<feature type="region of interest" description="AMP-binding" evidence="1">
    <location>
        <begin position="449"/>
        <end position="525"/>
    </location>
</feature>
<feature type="binding site" evidence="1">
    <location>
        <begin position="188"/>
        <end position="199"/>
    </location>
    <ligand>
        <name>AMP</name>
        <dbReference type="ChEBI" id="CHEBI:456215"/>
    </ligand>
</feature>